<dbReference type="EC" id="2.5.1.10"/>
<dbReference type="EC" id="2.5.1.1"/>
<dbReference type="EMBL" id="X82542">
    <property type="protein sequence ID" value="CAA57892.1"/>
    <property type="molecule type" value="mRNA"/>
</dbReference>
<dbReference type="PIR" id="S71398">
    <property type="entry name" value="S71398"/>
</dbReference>
<dbReference type="SMR" id="O24241"/>
<dbReference type="UniPathway" id="UPA00259">
    <property type="reaction ID" value="UER00368"/>
</dbReference>
<dbReference type="UniPathway" id="UPA00260">
    <property type="reaction ID" value="UER00369"/>
</dbReference>
<dbReference type="GO" id="GO:0005737">
    <property type="term" value="C:cytoplasm"/>
    <property type="evidence" value="ECO:0007669"/>
    <property type="project" value="UniProtKB-SubCell"/>
</dbReference>
<dbReference type="GO" id="GO:0004337">
    <property type="term" value="F:(2E,6E)-farnesyl diphosphate synthase activity"/>
    <property type="evidence" value="ECO:0007669"/>
    <property type="project" value="UniProtKB-EC"/>
</dbReference>
<dbReference type="GO" id="GO:0004161">
    <property type="term" value="F:dimethylallyltranstransferase activity"/>
    <property type="evidence" value="ECO:0007669"/>
    <property type="project" value="UniProtKB-EC"/>
</dbReference>
<dbReference type="GO" id="GO:0046872">
    <property type="term" value="F:metal ion binding"/>
    <property type="evidence" value="ECO:0007669"/>
    <property type="project" value="UniProtKB-KW"/>
</dbReference>
<dbReference type="GO" id="GO:0006695">
    <property type="term" value="P:cholesterol biosynthetic process"/>
    <property type="evidence" value="ECO:0007669"/>
    <property type="project" value="UniProtKB-KW"/>
</dbReference>
<dbReference type="GO" id="GO:0045337">
    <property type="term" value="P:farnesyl diphosphate biosynthetic process"/>
    <property type="evidence" value="ECO:0007669"/>
    <property type="project" value="UniProtKB-UniPathway"/>
</dbReference>
<dbReference type="GO" id="GO:0033384">
    <property type="term" value="P:geranyl diphosphate biosynthetic process"/>
    <property type="evidence" value="ECO:0007669"/>
    <property type="project" value="UniProtKB-UniPathway"/>
</dbReference>
<dbReference type="CDD" id="cd00685">
    <property type="entry name" value="Trans_IPPS_HT"/>
    <property type="match status" value="1"/>
</dbReference>
<dbReference type="FunFam" id="1.10.600.10:FF:000008">
    <property type="entry name" value="Farnesyl pyrophosphate synthase"/>
    <property type="match status" value="1"/>
</dbReference>
<dbReference type="Gene3D" id="1.10.600.10">
    <property type="entry name" value="Farnesyl Diphosphate Synthase"/>
    <property type="match status" value="1"/>
</dbReference>
<dbReference type="InterPro" id="IPR039702">
    <property type="entry name" value="FPS1-like"/>
</dbReference>
<dbReference type="InterPro" id="IPR008949">
    <property type="entry name" value="Isoprenoid_synthase_dom_sf"/>
</dbReference>
<dbReference type="InterPro" id="IPR000092">
    <property type="entry name" value="Polyprenyl_synt"/>
</dbReference>
<dbReference type="InterPro" id="IPR033749">
    <property type="entry name" value="Polyprenyl_synt_CS"/>
</dbReference>
<dbReference type="PANTHER" id="PTHR11525:SF0">
    <property type="entry name" value="FARNESYL PYROPHOSPHATE SYNTHASE"/>
    <property type="match status" value="1"/>
</dbReference>
<dbReference type="PANTHER" id="PTHR11525">
    <property type="entry name" value="FARNESYL-PYROPHOSPHATE SYNTHETASE"/>
    <property type="match status" value="1"/>
</dbReference>
<dbReference type="Pfam" id="PF00348">
    <property type="entry name" value="polyprenyl_synt"/>
    <property type="match status" value="1"/>
</dbReference>
<dbReference type="SFLD" id="SFLDS00005">
    <property type="entry name" value="Isoprenoid_Synthase_Type_I"/>
    <property type="match status" value="1"/>
</dbReference>
<dbReference type="SFLD" id="SFLDG01017">
    <property type="entry name" value="Polyprenyl_Transferase_Like"/>
    <property type="match status" value="1"/>
</dbReference>
<dbReference type="SUPFAM" id="SSF48576">
    <property type="entry name" value="Terpenoid synthases"/>
    <property type="match status" value="1"/>
</dbReference>
<dbReference type="PROSITE" id="PS00723">
    <property type="entry name" value="POLYPRENYL_SYNTHASE_1"/>
    <property type="match status" value="1"/>
</dbReference>
<dbReference type="PROSITE" id="PS00444">
    <property type="entry name" value="POLYPRENYL_SYNTHASE_2"/>
    <property type="match status" value="1"/>
</dbReference>
<protein>
    <recommendedName>
        <fullName>Farnesyl pyrophosphate synthase 1</fullName>
        <shortName>FPP synthase 1</shortName>
        <shortName>FPS 1</shortName>
        <ecNumber>2.5.1.10</ecNumber>
    </recommendedName>
    <alternativeName>
        <fullName>(2E,6E)-farnesyl diphosphate synthase 1</fullName>
    </alternativeName>
    <alternativeName>
        <fullName>Dimethylallyltranstransferase 1</fullName>
        <ecNumber>2.5.1.1</ecNumber>
    </alternativeName>
    <alternativeName>
        <fullName>Farnesyl diphosphate synthase 1</fullName>
    </alternativeName>
    <alternativeName>
        <fullName>Geranyltranstransferase 1</fullName>
    </alternativeName>
</protein>
<accession>O24241</accession>
<organism>
    <name type="scientific">Parthenium argentatum</name>
    <name type="common">Guayule rubber plant</name>
    <dbReference type="NCBI Taxonomy" id="35935"/>
    <lineage>
        <taxon>Eukaryota</taxon>
        <taxon>Viridiplantae</taxon>
        <taxon>Streptophyta</taxon>
        <taxon>Embryophyta</taxon>
        <taxon>Tracheophyta</taxon>
        <taxon>Spermatophyta</taxon>
        <taxon>Magnoliopsida</taxon>
        <taxon>eudicotyledons</taxon>
        <taxon>Gunneridae</taxon>
        <taxon>Pentapetalae</taxon>
        <taxon>asterids</taxon>
        <taxon>campanulids</taxon>
        <taxon>Asterales</taxon>
        <taxon>Asteraceae</taxon>
        <taxon>Asteroideae</taxon>
        <taxon>Heliantheae alliance</taxon>
        <taxon>Heliantheae</taxon>
        <taxon>Parthenium</taxon>
    </lineage>
</organism>
<name>FPPS1_PARAR</name>
<reference key="1">
    <citation type="journal article" date="1996" name="Arch. Biochem. Biophys.">
        <title>Cloning, characterization, and heterologous expression of cDNAs for farnesyl diphosphate synthase from the guayule rubber plant reveals that this prenyltransferase occurs in rubber particles.</title>
        <authorList>
            <person name="Pan Z."/>
            <person name="Herickhoff L.A."/>
            <person name="Backhaus R.A."/>
        </authorList>
    </citation>
    <scope>NUCLEOTIDE SEQUENCE [MRNA]</scope>
    <source>
        <strain>cv. Line 11591</strain>
        <tissue>Stem bark</tissue>
    </source>
</reference>
<keyword id="KW-0152">Cholesterol biosynthesis</keyword>
<keyword id="KW-0153">Cholesterol metabolism</keyword>
<keyword id="KW-0963">Cytoplasm</keyword>
<keyword id="KW-0414">Isoprene biosynthesis</keyword>
<keyword id="KW-0444">Lipid biosynthesis</keyword>
<keyword id="KW-0443">Lipid metabolism</keyword>
<keyword id="KW-0460">Magnesium</keyword>
<keyword id="KW-0479">Metal-binding</keyword>
<keyword id="KW-0752">Steroid biosynthesis</keyword>
<keyword id="KW-0753">Steroid metabolism</keyword>
<keyword id="KW-0756">Sterol biosynthesis</keyword>
<keyword id="KW-1207">Sterol metabolism</keyword>
<keyword id="KW-0808">Transferase</keyword>
<evidence type="ECO:0000250" key="1"/>
<evidence type="ECO:0000250" key="2">
    <source>
        <dbReference type="UniProtKB" id="P14324"/>
    </source>
</evidence>
<evidence type="ECO:0000305" key="3"/>
<sequence length="342" mass="39367">MSSDLKSRFLQVYDTLKSELINDPAFEFDDDSRQWVEKMLDYNVPGGKLNRGLSVIDSYQLLKGGELTDNEIFLAAALGWCIEWLQAYFLVLDDIMDESHTRRGQPCWFRLPKVGMIAANDGIILRNNVPRILKKHFRGKPYYVDLLDLFNEVEFQTASGQMIDLITTLVGEKDLSKYSLSIHRRIVQYKTAYYSFYLPVACALLMFGEDLEKHEEVKNVLVEMGTYFQVQDDYLDCFGAPEVIGKIGTDIEDFKCSWLVVKALELSNEEQKKILHENYGKKDPSSVAKVKELYHTLNLQGVFEDYENTSYKKLITSIEGHPSKAVQAVLKSFLGKIYKRQK</sequence>
<gene>
    <name type="primary">FPS1</name>
</gene>
<comment type="function">
    <text>Catalyzes the sequential condensation of isopentenyl pyrophosphate with the allylic pyrophosphates, dimethylallyl pyrophosphate, and then with the resultant geranylpyrophosphate to the ultimate product farnesyl pyrophosphate.</text>
</comment>
<comment type="catalytic activity">
    <reaction>
        <text>isopentenyl diphosphate + dimethylallyl diphosphate = (2E)-geranyl diphosphate + diphosphate</text>
        <dbReference type="Rhea" id="RHEA:22408"/>
        <dbReference type="ChEBI" id="CHEBI:33019"/>
        <dbReference type="ChEBI" id="CHEBI:57623"/>
        <dbReference type="ChEBI" id="CHEBI:58057"/>
        <dbReference type="ChEBI" id="CHEBI:128769"/>
        <dbReference type="EC" id="2.5.1.1"/>
    </reaction>
</comment>
<comment type="catalytic activity">
    <reaction>
        <text>isopentenyl diphosphate + (2E)-geranyl diphosphate = (2E,6E)-farnesyl diphosphate + diphosphate</text>
        <dbReference type="Rhea" id="RHEA:19361"/>
        <dbReference type="ChEBI" id="CHEBI:33019"/>
        <dbReference type="ChEBI" id="CHEBI:58057"/>
        <dbReference type="ChEBI" id="CHEBI:128769"/>
        <dbReference type="ChEBI" id="CHEBI:175763"/>
        <dbReference type="EC" id="2.5.1.10"/>
    </reaction>
</comment>
<comment type="cofactor">
    <cofactor evidence="1">
        <name>Mg(2+)</name>
        <dbReference type="ChEBI" id="CHEBI:18420"/>
    </cofactor>
    <text evidence="1">Binds 2 Mg(2+) ions per subunit.</text>
</comment>
<comment type="pathway">
    <text>Isoprenoid biosynthesis; farnesyl diphosphate biosynthesis; farnesyl diphosphate from geranyl diphosphate and isopentenyl diphosphate: step 1/1.</text>
</comment>
<comment type="pathway">
    <text>Isoprenoid biosynthesis; geranyl diphosphate biosynthesis; geranyl diphosphate from dimethylallyl diphosphate and isopentenyl diphosphate: step 1/1.</text>
</comment>
<comment type="subcellular location">
    <subcellularLocation>
        <location>Cytoplasm</location>
    </subcellularLocation>
    <text>Rubber particles.</text>
</comment>
<comment type="similarity">
    <text evidence="3">Belongs to the FPP/GGPP synthase family.</text>
</comment>
<feature type="chain" id="PRO_0000123959" description="Farnesyl pyrophosphate synthase 1">
    <location>
        <begin position="1"/>
        <end position="342"/>
    </location>
</feature>
<feature type="binding site" evidence="2">
    <location>
        <position position="48"/>
    </location>
    <ligand>
        <name>isopentenyl diphosphate</name>
        <dbReference type="ChEBI" id="CHEBI:128769"/>
    </ligand>
</feature>
<feature type="binding site" evidence="2">
    <location>
        <position position="51"/>
    </location>
    <ligand>
        <name>isopentenyl diphosphate</name>
        <dbReference type="ChEBI" id="CHEBI:128769"/>
    </ligand>
</feature>
<feature type="binding site" evidence="2">
    <location>
        <position position="86"/>
    </location>
    <ligand>
        <name>isopentenyl diphosphate</name>
        <dbReference type="ChEBI" id="CHEBI:128769"/>
    </ligand>
</feature>
<feature type="binding site" evidence="2">
    <location>
        <position position="93"/>
    </location>
    <ligand>
        <name>Mg(2+)</name>
        <dbReference type="ChEBI" id="CHEBI:18420"/>
        <label>1</label>
    </ligand>
</feature>
<feature type="binding site" evidence="2">
    <location>
        <position position="93"/>
    </location>
    <ligand>
        <name>Mg(2+)</name>
        <dbReference type="ChEBI" id="CHEBI:18420"/>
        <label>2</label>
    </ligand>
</feature>
<feature type="binding site" evidence="2">
    <location>
        <position position="97"/>
    </location>
    <ligand>
        <name>Mg(2+)</name>
        <dbReference type="ChEBI" id="CHEBI:18420"/>
        <label>1</label>
    </ligand>
</feature>
<feature type="binding site" evidence="2">
    <location>
        <position position="97"/>
    </location>
    <ligand>
        <name>Mg(2+)</name>
        <dbReference type="ChEBI" id="CHEBI:18420"/>
        <label>2</label>
    </ligand>
</feature>
<feature type="binding site" evidence="1">
    <location>
        <position position="102"/>
    </location>
    <ligand>
        <name>dimethylallyl diphosphate</name>
        <dbReference type="ChEBI" id="CHEBI:57623"/>
    </ligand>
</feature>
<feature type="binding site" evidence="2">
    <location>
        <position position="103"/>
    </location>
    <ligand>
        <name>isopentenyl diphosphate</name>
        <dbReference type="ChEBI" id="CHEBI:128769"/>
    </ligand>
</feature>
<feature type="binding site" evidence="1">
    <location>
        <position position="190"/>
    </location>
    <ligand>
        <name>dimethylallyl diphosphate</name>
        <dbReference type="ChEBI" id="CHEBI:57623"/>
    </ligand>
</feature>
<feature type="binding site" evidence="1">
    <location>
        <position position="191"/>
    </location>
    <ligand>
        <name>dimethylallyl diphosphate</name>
        <dbReference type="ChEBI" id="CHEBI:57623"/>
    </ligand>
</feature>
<feature type="binding site" evidence="1">
    <location>
        <position position="229"/>
    </location>
    <ligand>
        <name>dimethylallyl diphosphate</name>
        <dbReference type="ChEBI" id="CHEBI:57623"/>
    </ligand>
</feature>
<feature type="binding site" evidence="1">
    <location>
        <position position="246"/>
    </location>
    <ligand>
        <name>dimethylallyl diphosphate</name>
        <dbReference type="ChEBI" id="CHEBI:57623"/>
    </ligand>
</feature>
<feature type="binding site" evidence="1">
    <location>
        <position position="255"/>
    </location>
    <ligand>
        <name>dimethylallyl diphosphate</name>
        <dbReference type="ChEBI" id="CHEBI:57623"/>
    </ligand>
</feature>
<proteinExistence type="evidence at transcript level"/>